<sequence length="219" mass="25216">MNDTVLKPNLIIRHYKNLHNYASLFQEMRSYTDQRDEHSPDQLWILQHHPVLTQGQAGKPEHILIPSDLPVVQSDRGGQVTWHGPGQMVIYFMFDLNRLKWNVRTLVSFAEQLMIDLIKKYNIDAYAKADAPGVYVAERKIGSLGFKIRRGRSYHGLALNIDCDLSGFQTINPCGYAGLEMVRICDLVENYPRFDQLAQDVTAYFKEKSDFNDVQVILQ</sequence>
<dbReference type="EC" id="2.3.1.181" evidence="1"/>
<dbReference type="EMBL" id="CR543861">
    <property type="protein sequence ID" value="CAG69642.1"/>
    <property type="molecule type" value="Genomic_DNA"/>
</dbReference>
<dbReference type="RefSeq" id="WP_004929487.1">
    <property type="nucleotide sequence ID" value="NC_005966.1"/>
</dbReference>
<dbReference type="SMR" id="Q6F8H3"/>
<dbReference type="STRING" id="202950.GCA_001485005_02883"/>
<dbReference type="GeneID" id="45235157"/>
<dbReference type="KEGG" id="aci:ACIAD2927"/>
<dbReference type="eggNOG" id="COG0321">
    <property type="taxonomic scope" value="Bacteria"/>
</dbReference>
<dbReference type="HOGENOM" id="CLU_035168_3_1_6"/>
<dbReference type="OrthoDB" id="9787061at2"/>
<dbReference type="BioCyc" id="ASP62977:ACIAD_RS13210-MONOMER"/>
<dbReference type="UniPathway" id="UPA00538">
    <property type="reaction ID" value="UER00592"/>
</dbReference>
<dbReference type="Proteomes" id="UP000000430">
    <property type="component" value="Chromosome"/>
</dbReference>
<dbReference type="GO" id="GO:0005737">
    <property type="term" value="C:cytoplasm"/>
    <property type="evidence" value="ECO:0007669"/>
    <property type="project" value="UniProtKB-SubCell"/>
</dbReference>
<dbReference type="GO" id="GO:0033819">
    <property type="term" value="F:lipoyl(octanoyl) transferase activity"/>
    <property type="evidence" value="ECO:0007669"/>
    <property type="project" value="UniProtKB-EC"/>
</dbReference>
<dbReference type="GO" id="GO:0036211">
    <property type="term" value="P:protein modification process"/>
    <property type="evidence" value="ECO:0007669"/>
    <property type="project" value="InterPro"/>
</dbReference>
<dbReference type="CDD" id="cd16444">
    <property type="entry name" value="LipB"/>
    <property type="match status" value="1"/>
</dbReference>
<dbReference type="FunFam" id="3.30.930.10:FF:000020">
    <property type="entry name" value="Octanoyltransferase"/>
    <property type="match status" value="1"/>
</dbReference>
<dbReference type="Gene3D" id="3.30.930.10">
    <property type="entry name" value="Bira Bifunctional Protein, Domain 2"/>
    <property type="match status" value="1"/>
</dbReference>
<dbReference type="HAMAP" id="MF_00013">
    <property type="entry name" value="LipB"/>
    <property type="match status" value="1"/>
</dbReference>
<dbReference type="InterPro" id="IPR045864">
    <property type="entry name" value="aa-tRNA-synth_II/BPL/LPL"/>
</dbReference>
<dbReference type="InterPro" id="IPR004143">
    <property type="entry name" value="BPL_LPL_catalytic"/>
</dbReference>
<dbReference type="InterPro" id="IPR000544">
    <property type="entry name" value="Octanoyltransferase"/>
</dbReference>
<dbReference type="InterPro" id="IPR020605">
    <property type="entry name" value="Octanoyltransferase_CS"/>
</dbReference>
<dbReference type="NCBIfam" id="TIGR00214">
    <property type="entry name" value="lipB"/>
    <property type="match status" value="1"/>
</dbReference>
<dbReference type="NCBIfam" id="NF010922">
    <property type="entry name" value="PRK14342.1"/>
    <property type="match status" value="1"/>
</dbReference>
<dbReference type="PANTHER" id="PTHR10993:SF7">
    <property type="entry name" value="LIPOYLTRANSFERASE 2, MITOCHONDRIAL-RELATED"/>
    <property type="match status" value="1"/>
</dbReference>
<dbReference type="PANTHER" id="PTHR10993">
    <property type="entry name" value="OCTANOYLTRANSFERASE"/>
    <property type="match status" value="1"/>
</dbReference>
<dbReference type="Pfam" id="PF21948">
    <property type="entry name" value="LplA-B_cat"/>
    <property type="match status" value="1"/>
</dbReference>
<dbReference type="PIRSF" id="PIRSF016262">
    <property type="entry name" value="LPLase"/>
    <property type="match status" value="1"/>
</dbReference>
<dbReference type="SUPFAM" id="SSF55681">
    <property type="entry name" value="Class II aaRS and biotin synthetases"/>
    <property type="match status" value="1"/>
</dbReference>
<dbReference type="PROSITE" id="PS51733">
    <property type="entry name" value="BPL_LPL_CATALYTIC"/>
    <property type="match status" value="1"/>
</dbReference>
<dbReference type="PROSITE" id="PS01313">
    <property type="entry name" value="LIPB"/>
    <property type="match status" value="1"/>
</dbReference>
<gene>
    <name evidence="1" type="primary">lipB</name>
    <name type="ordered locus">ACIAD2927</name>
</gene>
<accession>Q6F8H3</accession>
<proteinExistence type="inferred from homology"/>
<protein>
    <recommendedName>
        <fullName evidence="1">Octanoyltransferase</fullName>
        <ecNumber evidence="1">2.3.1.181</ecNumber>
    </recommendedName>
    <alternativeName>
        <fullName evidence="1">Lipoate-protein ligase B</fullName>
    </alternativeName>
    <alternativeName>
        <fullName evidence="1">Lipoyl/octanoyl transferase</fullName>
    </alternativeName>
    <alternativeName>
        <fullName evidence="1">Octanoyl-[acyl-carrier-protein]-protein N-octanoyltransferase</fullName>
    </alternativeName>
</protein>
<comment type="function">
    <text evidence="1">Catalyzes the transfer of endogenously produced octanoic acid from octanoyl-acyl-carrier-protein onto the lipoyl domains of lipoate-dependent enzymes. Lipoyl-ACP can also act as a substrate although octanoyl-ACP is likely to be the physiological substrate.</text>
</comment>
<comment type="catalytic activity">
    <reaction evidence="1">
        <text>octanoyl-[ACP] + L-lysyl-[protein] = N(6)-octanoyl-L-lysyl-[protein] + holo-[ACP] + H(+)</text>
        <dbReference type="Rhea" id="RHEA:17665"/>
        <dbReference type="Rhea" id="RHEA-COMP:9636"/>
        <dbReference type="Rhea" id="RHEA-COMP:9685"/>
        <dbReference type="Rhea" id="RHEA-COMP:9752"/>
        <dbReference type="Rhea" id="RHEA-COMP:9928"/>
        <dbReference type="ChEBI" id="CHEBI:15378"/>
        <dbReference type="ChEBI" id="CHEBI:29969"/>
        <dbReference type="ChEBI" id="CHEBI:64479"/>
        <dbReference type="ChEBI" id="CHEBI:78463"/>
        <dbReference type="ChEBI" id="CHEBI:78809"/>
        <dbReference type="EC" id="2.3.1.181"/>
    </reaction>
</comment>
<comment type="pathway">
    <text evidence="1">Protein modification; protein lipoylation via endogenous pathway; protein N(6)-(lipoyl)lysine from octanoyl-[acyl-carrier-protein]: step 1/2.</text>
</comment>
<comment type="subcellular location">
    <subcellularLocation>
        <location evidence="1">Cytoplasm</location>
    </subcellularLocation>
</comment>
<comment type="miscellaneous">
    <text evidence="1">In the reaction, the free carboxyl group of octanoic acid is attached via an amide linkage to the epsilon-amino group of a specific lysine residue of lipoyl domains of lipoate-dependent enzymes.</text>
</comment>
<comment type="similarity">
    <text evidence="1">Belongs to the LipB family.</text>
</comment>
<name>LIPB_ACIAD</name>
<keyword id="KW-0012">Acyltransferase</keyword>
<keyword id="KW-0963">Cytoplasm</keyword>
<keyword id="KW-0808">Transferase</keyword>
<organism>
    <name type="scientific">Acinetobacter baylyi (strain ATCC 33305 / BD413 / ADP1)</name>
    <dbReference type="NCBI Taxonomy" id="62977"/>
    <lineage>
        <taxon>Bacteria</taxon>
        <taxon>Pseudomonadati</taxon>
        <taxon>Pseudomonadota</taxon>
        <taxon>Gammaproteobacteria</taxon>
        <taxon>Moraxellales</taxon>
        <taxon>Moraxellaceae</taxon>
        <taxon>Acinetobacter</taxon>
    </lineage>
</organism>
<evidence type="ECO:0000255" key="1">
    <source>
        <dbReference type="HAMAP-Rule" id="MF_00013"/>
    </source>
</evidence>
<evidence type="ECO:0000255" key="2">
    <source>
        <dbReference type="PROSITE-ProRule" id="PRU01067"/>
    </source>
</evidence>
<feature type="chain" id="PRO_0000062806" description="Octanoyltransferase">
    <location>
        <begin position="1"/>
        <end position="219"/>
    </location>
</feature>
<feature type="domain" description="BPL/LPL catalytic" evidence="2">
    <location>
        <begin position="37"/>
        <end position="219"/>
    </location>
</feature>
<feature type="active site" description="Acyl-thioester intermediate" evidence="1">
    <location>
        <position position="174"/>
    </location>
</feature>
<feature type="binding site" evidence="1">
    <location>
        <begin position="76"/>
        <end position="83"/>
    </location>
    <ligand>
        <name>substrate</name>
    </ligand>
</feature>
<feature type="binding site" evidence="1">
    <location>
        <begin position="143"/>
        <end position="145"/>
    </location>
    <ligand>
        <name>substrate</name>
    </ligand>
</feature>
<feature type="binding site" evidence="1">
    <location>
        <begin position="156"/>
        <end position="158"/>
    </location>
    <ligand>
        <name>substrate</name>
    </ligand>
</feature>
<feature type="site" description="Lowers pKa of active site Cys" evidence="1">
    <location>
        <position position="140"/>
    </location>
</feature>
<reference key="1">
    <citation type="journal article" date="2004" name="Nucleic Acids Res.">
        <title>Unique features revealed by the genome sequence of Acinetobacter sp. ADP1, a versatile and naturally transformation competent bacterium.</title>
        <authorList>
            <person name="Barbe V."/>
            <person name="Vallenet D."/>
            <person name="Fonknechten N."/>
            <person name="Kreimeyer A."/>
            <person name="Oztas S."/>
            <person name="Labarre L."/>
            <person name="Cruveiller S."/>
            <person name="Robert C."/>
            <person name="Duprat S."/>
            <person name="Wincker P."/>
            <person name="Ornston L.N."/>
            <person name="Weissenbach J."/>
            <person name="Marliere P."/>
            <person name="Cohen G.N."/>
            <person name="Medigue C."/>
        </authorList>
    </citation>
    <scope>NUCLEOTIDE SEQUENCE [LARGE SCALE GENOMIC DNA]</scope>
    <source>
        <strain>ATCC 33305 / BD413 / ADP1</strain>
    </source>
</reference>